<organism>
    <name type="scientific">Salmonella enteritidis PT4 (strain P125109)</name>
    <dbReference type="NCBI Taxonomy" id="550537"/>
    <lineage>
        <taxon>Bacteria</taxon>
        <taxon>Pseudomonadati</taxon>
        <taxon>Pseudomonadota</taxon>
        <taxon>Gammaproteobacteria</taxon>
        <taxon>Enterobacterales</taxon>
        <taxon>Enterobacteriaceae</taxon>
        <taxon>Salmonella</taxon>
    </lineage>
</organism>
<comment type="function">
    <text evidence="1">Catalyzes the formation of sulfite from phosphoadenosine 5'-phosphosulfate (PAPS) using thioredoxin as an electron donor.</text>
</comment>
<comment type="catalytic activity">
    <reaction evidence="1">
        <text>[thioredoxin]-disulfide + sulfite + adenosine 3',5'-bisphosphate + 2 H(+) = [thioredoxin]-dithiol + 3'-phosphoadenylyl sulfate</text>
        <dbReference type="Rhea" id="RHEA:11724"/>
        <dbReference type="Rhea" id="RHEA-COMP:10698"/>
        <dbReference type="Rhea" id="RHEA-COMP:10700"/>
        <dbReference type="ChEBI" id="CHEBI:15378"/>
        <dbReference type="ChEBI" id="CHEBI:17359"/>
        <dbReference type="ChEBI" id="CHEBI:29950"/>
        <dbReference type="ChEBI" id="CHEBI:50058"/>
        <dbReference type="ChEBI" id="CHEBI:58339"/>
        <dbReference type="ChEBI" id="CHEBI:58343"/>
        <dbReference type="EC" id="1.8.4.8"/>
    </reaction>
</comment>
<comment type="pathway">
    <text evidence="1">Sulfur metabolism; hydrogen sulfide biosynthesis; sulfite from sulfate: step 3/3.</text>
</comment>
<comment type="subcellular location">
    <subcellularLocation>
        <location evidence="1">Cytoplasm</location>
    </subcellularLocation>
</comment>
<comment type="similarity">
    <text evidence="1">Belongs to the PAPS reductase family. CysH subfamily.</text>
</comment>
<evidence type="ECO:0000255" key="1">
    <source>
        <dbReference type="HAMAP-Rule" id="MF_00063"/>
    </source>
</evidence>
<keyword id="KW-0963">Cytoplasm</keyword>
<keyword id="KW-0560">Oxidoreductase</keyword>
<sequence>MSKLDLNALNELPKVDRVLALAETNAQLETLTAEERVAWALENLPGEYVLSSSFGIQAAVSLHLVNQIRPDIPVILTDTGYLFPETYQFIDELTDKLKLNLKVYRAGESPAWQEARYGKLWEQGVEGIEKYNEINKVEPMNRALKELKAQTWFAGLRREQSGSRAHLPVLAIQRGVFKVLPIIDWDNRTVYQYLQKHGLKYHPLWDQGYLSVGDTHTTRKWEPGMAEEETRFFGLKRECGLHEG</sequence>
<reference key="1">
    <citation type="journal article" date="2008" name="Genome Res.">
        <title>Comparative genome analysis of Salmonella enteritidis PT4 and Salmonella gallinarum 287/91 provides insights into evolutionary and host adaptation pathways.</title>
        <authorList>
            <person name="Thomson N.R."/>
            <person name="Clayton D.J."/>
            <person name="Windhorst D."/>
            <person name="Vernikos G."/>
            <person name="Davidson S."/>
            <person name="Churcher C."/>
            <person name="Quail M.A."/>
            <person name="Stevens M."/>
            <person name="Jones M.A."/>
            <person name="Watson M."/>
            <person name="Barron A."/>
            <person name="Layton A."/>
            <person name="Pickard D."/>
            <person name="Kingsley R.A."/>
            <person name="Bignell A."/>
            <person name="Clark L."/>
            <person name="Harris B."/>
            <person name="Ormond D."/>
            <person name="Abdellah Z."/>
            <person name="Brooks K."/>
            <person name="Cherevach I."/>
            <person name="Chillingworth T."/>
            <person name="Woodward J."/>
            <person name="Norberczak H."/>
            <person name="Lord A."/>
            <person name="Arrowsmith C."/>
            <person name="Jagels K."/>
            <person name="Moule S."/>
            <person name="Mungall K."/>
            <person name="Saunders M."/>
            <person name="Whitehead S."/>
            <person name="Chabalgoity J.A."/>
            <person name="Maskell D."/>
            <person name="Humphreys T."/>
            <person name="Roberts M."/>
            <person name="Barrow P.A."/>
            <person name="Dougan G."/>
            <person name="Parkhill J."/>
        </authorList>
    </citation>
    <scope>NUCLEOTIDE SEQUENCE [LARGE SCALE GENOMIC DNA]</scope>
    <source>
        <strain>P125109</strain>
    </source>
</reference>
<name>CYSH_SALEP</name>
<dbReference type="EC" id="1.8.4.8" evidence="1"/>
<dbReference type="EMBL" id="AM933172">
    <property type="protein sequence ID" value="CAR34364.1"/>
    <property type="molecule type" value="Genomic_DNA"/>
</dbReference>
<dbReference type="RefSeq" id="WP_000039870.1">
    <property type="nucleotide sequence ID" value="NC_011294.1"/>
</dbReference>
<dbReference type="SMR" id="B5QW34"/>
<dbReference type="KEGG" id="set:SEN2785"/>
<dbReference type="HOGENOM" id="CLU_044089_3_0_6"/>
<dbReference type="UniPathway" id="UPA00140">
    <property type="reaction ID" value="UER00206"/>
</dbReference>
<dbReference type="Proteomes" id="UP000000613">
    <property type="component" value="Chromosome"/>
</dbReference>
<dbReference type="GO" id="GO:0005737">
    <property type="term" value="C:cytoplasm"/>
    <property type="evidence" value="ECO:0007669"/>
    <property type="project" value="UniProtKB-SubCell"/>
</dbReference>
<dbReference type="GO" id="GO:0004604">
    <property type="term" value="F:phosphoadenylyl-sulfate reductase (thioredoxin) activity"/>
    <property type="evidence" value="ECO:0007669"/>
    <property type="project" value="UniProtKB-UniRule"/>
</dbReference>
<dbReference type="GO" id="GO:0070814">
    <property type="term" value="P:hydrogen sulfide biosynthetic process"/>
    <property type="evidence" value="ECO:0007669"/>
    <property type="project" value="UniProtKB-UniRule"/>
</dbReference>
<dbReference type="GO" id="GO:0019379">
    <property type="term" value="P:sulfate assimilation, phosphoadenylyl sulfate reduction by phosphoadenylyl-sulfate reductase (thioredoxin)"/>
    <property type="evidence" value="ECO:0007669"/>
    <property type="project" value="UniProtKB-UniRule"/>
</dbReference>
<dbReference type="CDD" id="cd23945">
    <property type="entry name" value="PAPS_reductase"/>
    <property type="match status" value="1"/>
</dbReference>
<dbReference type="FunFam" id="3.40.50.620:FF:000043">
    <property type="entry name" value="Phosphoadenosine phosphosulfate reductase"/>
    <property type="match status" value="1"/>
</dbReference>
<dbReference type="Gene3D" id="3.40.50.620">
    <property type="entry name" value="HUPs"/>
    <property type="match status" value="1"/>
</dbReference>
<dbReference type="HAMAP" id="MF_00063">
    <property type="entry name" value="CysH"/>
    <property type="match status" value="1"/>
</dbReference>
<dbReference type="InterPro" id="IPR004511">
    <property type="entry name" value="PAPS/APS_Rdtase"/>
</dbReference>
<dbReference type="InterPro" id="IPR002500">
    <property type="entry name" value="PAPS_reduct_dom"/>
</dbReference>
<dbReference type="InterPro" id="IPR011800">
    <property type="entry name" value="PAPS_reductase_CysH"/>
</dbReference>
<dbReference type="InterPro" id="IPR014729">
    <property type="entry name" value="Rossmann-like_a/b/a_fold"/>
</dbReference>
<dbReference type="NCBIfam" id="TIGR00434">
    <property type="entry name" value="cysH"/>
    <property type="match status" value="1"/>
</dbReference>
<dbReference type="NCBIfam" id="TIGR02057">
    <property type="entry name" value="PAPS_reductase"/>
    <property type="match status" value="1"/>
</dbReference>
<dbReference type="NCBIfam" id="NF002537">
    <property type="entry name" value="PRK02090.1"/>
    <property type="match status" value="1"/>
</dbReference>
<dbReference type="PANTHER" id="PTHR46509">
    <property type="entry name" value="PHOSPHOADENOSINE PHOSPHOSULFATE REDUCTASE"/>
    <property type="match status" value="1"/>
</dbReference>
<dbReference type="PANTHER" id="PTHR46509:SF1">
    <property type="entry name" value="PHOSPHOADENOSINE PHOSPHOSULFATE REDUCTASE"/>
    <property type="match status" value="1"/>
</dbReference>
<dbReference type="Pfam" id="PF01507">
    <property type="entry name" value="PAPS_reduct"/>
    <property type="match status" value="1"/>
</dbReference>
<dbReference type="PIRSF" id="PIRSF000857">
    <property type="entry name" value="PAPS_reductase"/>
    <property type="match status" value="1"/>
</dbReference>
<dbReference type="SUPFAM" id="SSF52402">
    <property type="entry name" value="Adenine nucleotide alpha hydrolases-like"/>
    <property type="match status" value="1"/>
</dbReference>
<accession>B5QW34</accession>
<proteinExistence type="inferred from homology"/>
<gene>
    <name evidence="1" type="primary">cysH</name>
    <name type="ordered locus">SEN2785</name>
</gene>
<protein>
    <recommendedName>
        <fullName evidence="1">Phosphoadenosine 5'-phosphosulfate reductase</fullName>
        <shortName evidence="1">PAPS reductase</shortName>
        <ecNumber evidence="1">1.8.4.8</ecNumber>
    </recommendedName>
    <alternativeName>
        <fullName evidence="1">3'-phosphoadenylylsulfate reductase</fullName>
    </alternativeName>
    <alternativeName>
        <fullName evidence="1">PAPS reductase, thioredoxin dependent</fullName>
    </alternativeName>
    <alternativeName>
        <fullName evidence="1">PAPS sulfotransferase</fullName>
    </alternativeName>
    <alternativeName>
        <fullName evidence="1">PAdoPS reductase</fullName>
    </alternativeName>
</protein>
<feature type="chain" id="PRO_1000092181" description="Phosphoadenosine 5'-phosphosulfate reductase">
    <location>
        <begin position="1"/>
        <end position="244"/>
    </location>
</feature>
<feature type="active site" description="Nucleophile; cysteine thiosulfonate intermediate" evidence="1">
    <location>
        <position position="239"/>
    </location>
</feature>